<gene>
    <name type="ordered locus">MIMI_L779</name>
</gene>
<name>YL779_MIMIV</name>
<proteinExistence type="predicted"/>
<sequence>MKKFFIIDAEYLFVYGLYVAENPIKAVTIAYNNTLKDSYHDNIDGETITLLAYEITSVPTIHVINCARYSVNNYMIINGLPTLVEYRLDMKFDDTPIFDLLYF</sequence>
<reference key="1">
    <citation type="journal article" date="2004" name="Science">
        <title>The 1.2-megabase genome sequence of Mimivirus.</title>
        <authorList>
            <person name="Raoult D."/>
            <person name="Audic S."/>
            <person name="Robert C."/>
            <person name="Abergel C."/>
            <person name="Renesto P."/>
            <person name="Ogata H."/>
            <person name="La Scola B."/>
            <person name="Susan M."/>
            <person name="Claverie J.-M."/>
        </authorList>
    </citation>
    <scope>NUCLEOTIDE SEQUENCE [LARGE SCALE GENOMIC DNA]</scope>
    <source>
        <strain>Rowbotham-Bradford</strain>
    </source>
</reference>
<organismHost>
    <name type="scientific">Acanthamoeba polyphaga</name>
    <name type="common">Amoeba</name>
    <dbReference type="NCBI Taxonomy" id="5757"/>
</organismHost>
<accession>Q5UPR1</accession>
<keyword id="KW-1185">Reference proteome</keyword>
<protein>
    <recommendedName>
        <fullName>Uncharacterized protein L779</fullName>
    </recommendedName>
</protein>
<dbReference type="EMBL" id="AY653733">
    <property type="protein sequence ID" value="AAV51039.1"/>
    <property type="molecule type" value="Genomic_DNA"/>
</dbReference>
<dbReference type="KEGG" id="vg:9925440"/>
<dbReference type="Proteomes" id="UP000001134">
    <property type="component" value="Genome"/>
</dbReference>
<organism>
    <name type="scientific">Acanthamoeba polyphaga mimivirus</name>
    <name type="common">APMV</name>
    <dbReference type="NCBI Taxonomy" id="212035"/>
    <lineage>
        <taxon>Viruses</taxon>
        <taxon>Varidnaviria</taxon>
        <taxon>Bamfordvirae</taxon>
        <taxon>Nucleocytoviricota</taxon>
        <taxon>Megaviricetes</taxon>
        <taxon>Imitervirales</taxon>
        <taxon>Mimiviridae</taxon>
        <taxon>Megamimivirinae</taxon>
        <taxon>Mimivirus</taxon>
        <taxon>Mimivirus bradfordmassiliense</taxon>
    </lineage>
</organism>
<feature type="chain" id="PRO_0000243977" description="Uncharacterized protein L779">
    <location>
        <begin position="1"/>
        <end position="103"/>
    </location>
</feature>